<proteinExistence type="evidence at protein level"/>
<gene>
    <name type="primary">MNX1</name>
    <name type="synonym">HLXB9</name>
</gene>
<accession>P50219</accession>
<accession>F5H401</accession>
<accession>Q9Y648</accession>
<dbReference type="EMBL" id="U07664">
    <property type="protein sequence ID" value="AAB60647.1"/>
    <property type="molecule type" value="Genomic_DNA"/>
</dbReference>
<dbReference type="EMBL" id="U07663">
    <property type="protein sequence ID" value="AAB60647.1"/>
    <property type="status" value="JOINED"/>
    <property type="molecule type" value="Genomic_DNA"/>
</dbReference>
<dbReference type="EMBL" id="AC006357">
    <property type="status" value="NOT_ANNOTATED_CDS"/>
    <property type="molecule type" value="Genomic_DNA"/>
</dbReference>
<dbReference type="EMBL" id="AH007909">
    <property type="protein sequence ID" value="AAD41467.1"/>
    <property type="molecule type" value="Genomic_DNA"/>
</dbReference>
<dbReference type="CCDS" id="CCDS34788.1">
    <molecule id="P50219-1"/>
</dbReference>
<dbReference type="CCDS" id="CCDS55187.1">
    <molecule id="P50219-2"/>
</dbReference>
<dbReference type="RefSeq" id="NP_001158727.1">
    <molecule id="P50219-2"/>
    <property type="nucleotide sequence ID" value="NM_001165255.2"/>
</dbReference>
<dbReference type="RefSeq" id="NP_005506.3">
    <molecule id="P50219-1"/>
    <property type="nucleotide sequence ID" value="NM_005515.3"/>
</dbReference>
<dbReference type="SMR" id="P50219"/>
<dbReference type="BioGRID" id="109355">
    <property type="interactions" value="27"/>
</dbReference>
<dbReference type="FunCoup" id="P50219">
    <property type="interactions" value="1551"/>
</dbReference>
<dbReference type="IntAct" id="P50219">
    <property type="interactions" value="22"/>
</dbReference>
<dbReference type="STRING" id="9606.ENSP00000252971"/>
<dbReference type="GlyGen" id="P50219">
    <property type="glycosylation" value="2 sites, 1 O-linked glycan (2 sites)"/>
</dbReference>
<dbReference type="iPTMnet" id="P50219"/>
<dbReference type="PhosphoSitePlus" id="P50219"/>
<dbReference type="BioMuta" id="MNX1"/>
<dbReference type="DMDM" id="259016336"/>
<dbReference type="jPOST" id="P50219"/>
<dbReference type="MassIVE" id="P50219"/>
<dbReference type="PaxDb" id="9606-ENSP00000252971"/>
<dbReference type="PeptideAtlas" id="P50219"/>
<dbReference type="ProteomicsDB" id="26426"/>
<dbReference type="ProteomicsDB" id="56203">
    <molecule id="P50219-1"/>
</dbReference>
<dbReference type="Pumba" id="P50219"/>
<dbReference type="Antibodypedia" id="33173">
    <property type="antibodies" value="217 antibodies from 35 providers"/>
</dbReference>
<dbReference type="DNASU" id="3110"/>
<dbReference type="Ensembl" id="ENST00000252971.11">
    <molecule id="P50219-1"/>
    <property type="protein sequence ID" value="ENSP00000252971.5"/>
    <property type="gene ID" value="ENSG00000130675.15"/>
</dbReference>
<dbReference type="Ensembl" id="ENST00000543409.5">
    <molecule id="P50219-2"/>
    <property type="protein sequence ID" value="ENSP00000438552.1"/>
    <property type="gene ID" value="ENSG00000130675.15"/>
</dbReference>
<dbReference type="GeneID" id="3110"/>
<dbReference type="KEGG" id="hsa:3110"/>
<dbReference type="MANE-Select" id="ENST00000252971.11">
    <property type="protein sequence ID" value="ENSP00000252971.5"/>
    <property type="RefSeq nucleotide sequence ID" value="NM_005515.4"/>
    <property type="RefSeq protein sequence ID" value="NP_005506.3"/>
</dbReference>
<dbReference type="UCSC" id="uc003wnc.1">
    <molecule id="P50219-1"/>
    <property type="organism name" value="human"/>
</dbReference>
<dbReference type="AGR" id="HGNC:4979"/>
<dbReference type="CTD" id="3110"/>
<dbReference type="DisGeNET" id="3110"/>
<dbReference type="GeneCards" id="MNX1"/>
<dbReference type="GeneReviews" id="MNX1"/>
<dbReference type="HGNC" id="HGNC:4979">
    <property type="gene designation" value="MNX1"/>
</dbReference>
<dbReference type="HPA" id="ENSG00000130675">
    <property type="expression patterns" value="Group enriched (intestine, pancreas)"/>
</dbReference>
<dbReference type="MalaCards" id="MNX1"/>
<dbReference type="MIM" id="142994">
    <property type="type" value="gene"/>
</dbReference>
<dbReference type="MIM" id="176450">
    <property type="type" value="phenotype"/>
</dbReference>
<dbReference type="neXtProt" id="NX_P50219"/>
<dbReference type="OpenTargets" id="ENSG00000130675"/>
<dbReference type="Orphanet" id="1552">
    <property type="disease" value="Currarino syndrome"/>
</dbReference>
<dbReference type="PharmGKB" id="PA162396041"/>
<dbReference type="VEuPathDB" id="HostDB:ENSG00000130675"/>
<dbReference type="eggNOG" id="KOG0489">
    <property type="taxonomic scope" value="Eukaryota"/>
</dbReference>
<dbReference type="GeneTree" id="ENSGT00940000160059"/>
<dbReference type="HOGENOM" id="CLU_049543_4_0_1"/>
<dbReference type="InParanoid" id="P50219"/>
<dbReference type="OMA" id="YHAKTDS"/>
<dbReference type="OrthoDB" id="6159439at2759"/>
<dbReference type="PAN-GO" id="P50219">
    <property type="GO annotations" value="6 GO annotations based on evolutionary models"/>
</dbReference>
<dbReference type="PhylomeDB" id="P50219"/>
<dbReference type="TreeFam" id="TF351530"/>
<dbReference type="PathwayCommons" id="P50219"/>
<dbReference type="SignaLink" id="P50219"/>
<dbReference type="SIGNOR" id="P50219"/>
<dbReference type="BioGRID-ORCS" id="3110">
    <property type="hits" value="20 hits in 1180 CRISPR screens"/>
</dbReference>
<dbReference type="GeneWiki" id="MNX1"/>
<dbReference type="GenomeRNAi" id="3110"/>
<dbReference type="Pharos" id="P50219">
    <property type="development level" value="Tbio"/>
</dbReference>
<dbReference type="PRO" id="PR:P50219"/>
<dbReference type="Proteomes" id="UP000005640">
    <property type="component" value="Chromosome 7"/>
</dbReference>
<dbReference type="RNAct" id="P50219">
    <property type="molecule type" value="protein"/>
</dbReference>
<dbReference type="Bgee" id="ENSG00000130675">
    <property type="expression patterns" value="Expressed in body of pancreas and 110 other cell types or tissues"/>
</dbReference>
<dbReference type="ExpressionAtlas" id="P50219">
    <property type="expression patterns" value="baseline and differential"/>
</dbReference>
<dbReference type="GO" id="GO:0000785">
    <property type="term" value="C:chromatin"/>
    <property type="evidence" value="ECO:0000247"/>
    <property type="project" value="NTNU_SB"/>
</dbReference>
<dbReference type="GO" id="GO:0005829">
    <property type="term" value="C:cytosol"/>
    <property type="evidence" value="ECO:0000314"/>
    <property type="project" value="HPA"/>
</dbReference>
<dbReference type="GO" id="GO:0005730">
    <property type="term" value="C:nucleolus"/>
    <property type="evidence" value="ECO:0000314"/>
    <property type="project" value="HPA"/>
</dbReference>
<dbReference type="GO" id="GO:0005654">
    <property type="term" value="C:nucleoplasm"/>
    <property type="evidence" value="ECO:0000314"/>
    <property type="project" value="HPA"/>
</dbReference>
<dbReference type="GO" id="GO:0005634">
    <property type="term" value="C:nucleus"/>
    <property type="evidence" value="ECO:0000318"/>
    <property type="project" value="GO_Central"/>
</dbReference>
<dbReference type="GO" id="GO:0000981">
    <property type="term" value="F:DNA-binding transcription factor activity, RNA polymerase II-specific"/>
    <property type="evidence" value="ECO:0000247"/>
    <property type="project" value="NTNU_SB"/>
</dbReference>
<dbReference type="GO" id="GO:0001227">
    <property type="term" value="F:DNA-binding transcription repressor activity, RNA polymerase II-specific"/>
    <property type="evidence" value="ECO:0007669"/>
    <property type="project" value="Ensembl"/>
</dbReference>
<dbReference type="GO" id="GO:1990837">
    <property type="term" value="F:sequence-specific double-stranded DNA binding"/>
    <property type="evidence" value="ECO:0000314"/>
    <property type="project" value="ARUK-UCL"/>
</dbReference>
<dbReference type="GO" id="GO:0007417">
    <property type="term" value="P:central nervous system development"/>
    <property type="evidence" value="ECO:0000318"/>
    <property type="project" value="GO_Central"/>
</dbReference>
<dbReference type="GO" id="GO:0031018">
    <property type="term" value="P:endocrine pancreas development"/>
    <property type="evidence" value="ECO:0000318"/>
    <property type="project" value="GO_Central"/>
</dbReference>
<dbReference type="GO" id="GO:0048812">
    <property type="term" value="P:neuron projection morphogenesis"/>
    <property type="evidence" value="ECO:0000318"/>
    <property type="project" value="GO_Central"/>
</dbReference>
<dbReference type="GO" id="GO:0021520">
    <property type="term" value="P:spinal cord motor neuron cell fate specification"/>
    <property type="evidence" value="ECO:0000318"/>
    <property type="project" value="GO_Central"/>
</dbReference>
<dbReference type="CDD" id="cd00086">
    <property type="entry name" value="homeodomain"/>
    <property type="match status" value="1"/>
</dbReference>
<dbReference type="FunFam" id="1.10.10.60:FF:000243">
    <property type="entry name" value="Motor neuron and pancreas homeobox 1"/>
    <property type="match status" value="1"/>
</dbReference>
<dbReference type="Gene3D" id="1.10.10.60">
    <property type="entry name" value="Homeodomain-like"/>
    <property type="match status" value="1"/>
</dbReference>
<dbReference type="InterPro" id="IPR001356">
    <property type="entry name" value="HD"/>
</dbReference>
<dbReference type="InterPro" id="IPR020479">
    <property type="entry name" value="HD_metazoa"/>
</dbReference>
<dbReference type="InterPro" id="IPR017970">
    <property type="entry name" value="Homeobox_CS"/>
</dbReference>
<dbReference type="InterPro" id="IPR009057">
    <property type="entry name" value="Homeodomain-like_sf"/>
</dbReference>
<dbReference type="InterPro" id="IPR042768">
    <property type="entry name" value="MNX1/Ceh-12"/>
</dbReference>
<dbReference type="PANTHER" id="PTHR24335">
    <property type="entry name" value="MOTOR NEURON AND PANCREAS HOMEOBOX PROTEIN"/>
    <property type="match status" value="1"/>
</dbReference>
<dbReference type="PANTHER" id="PTHR24335:SF3">
    <property type="entry name" value="MOTOR NEURON AND PANCREAS HOMEOBOX PROTEIN 1"/>
    <property type="match status" value="1"/>
</dbReference>
<dbReference type="Pfam" id="PF00046">
    <property type="entry name" value="Homeodomain"/>
    <property type="match status" value="1"/>
</dbReference>
<dbReference type="PRINTS" id="PR00024">
    <property type="entry name" value="HOMEOBOX"/>
</dbReference>
<dbReference type="SMART" id="SM00389">
    <property type="entry name" value="HOX"/>
    <property type="match status" value="1"/>
</dbReference>
<dbReference type="SUPFAM" id="SSF46689">
    <property type="entry name" value="Homeodomain-like"/>
    <property type="match status" value="1"/>
</dbReference>
<dbReference type="PROSITE" id="PS00027">
    <property type="entry name" value="HOMEOBOX_1"/>
    <property type="match status" value="1"/>
</dbReference>
<dbReference type="PROSITE" id="PS50071">
    <property type="entry name" value="HOMEOBOX_2"/>
    <property type="match status" value="1"/>
</dbReference>
<name>MNX1_HUMAN</name>
<comment type="function">
    <text evidence="1">Transcription factor (By similarity). Recognizes and binds to the regulatory elements of target genes, such as visual system homeobox CHX10, negatively modulating transcription (By similarity). Plays a role in establishing motor neuron identity, in concert with LIM domain transcription factor LMO4 (By similarity). Involved in negatively modulating transcription of interneuron genes in motor neurons, acting, at least in part, by blocking regulatory sequence interactions of the ISL1-LHX3 complex (By similarity). Involved in pancreas development and function; may play a role in pancreatic cell fate specification (By similarity).</text>
</comment>
<comment type="subcellular location">
    <subcellularLocation>
        <location>Nucleus</location>
    </subcellularLocation>
</comment>
<comment type="alternative products">
    <event type="alternative splicing"/>
    <isoform>
        <id>P50219-1</id>
        <name>1</name>
        <sequence type="displayed"/>
    </isoform>
    <isoform>
        <id>P50219-2</id>
        <name>2</name>
        <sequence type="described" ref="VSP_046773 VSP_046774"/>
    </isoform>
</comment>
<comment type="tissue specificity">
    <text>Expressed in lymphoid and pancreatic tissues.</text>
</comment>
<comment type="disease" evidence="4 5 6 7">
    <disease id="DI-01458">
        <name>Currarino syndrome</name>
        <acronym>CURRAS</acronym>
        <description>The triad of a presacral tumor, sacral agenesis and anorectal malformation constitutes the Currarino syndrome which is caused by dorsal-ventral patterning defects during embryonic development. The syndrome occurs in the majority of patients as an autosomal dominant trait.</description>
        <dbReference type="MIM" id="176450"/>
    </disease>
    <text>The disease is caused by variants affecting the gene represented in this entry.</text>
</comment>
<comment type="online information" name="Atlas of Genetics and Cytogenetics in Oncology and Haematology">
    <link uri="https://atlasgeneticsoncology.org/gene/393/HLXB9"/>
</comment>
<keyword id="KW-0007">Acetylation</keyword>
<keyword id="KW-0025">Alternative splicing</keyword>
<keyword id="KW-0225">Disease variant</keyword>
<keyword id="KW-0238">DNA-binding</keyword>
<keyword id="KW-0371">Homeobox</keyword>
<keyword id="KW-0539">Nucleus</keyword>
<keyword id="KW-0597">Phosphoprotein</keyword>
<keyword id="KW-1267">Proteomics identification</keyword>
<keyword id="KW-1185">Reference proteome</keyword>
<keyword id="KW-0804">Transcription</keyword>
<keyword id="KW-0805">Transcription regulation</keyword>
<organism>
    <name type="scientific">Homo sapiens</name>
    <name type="common">Human</name>
    <dbReference type="NCBI Taxonomy" id="9606"/>
    <lineage>
        <taxon>Eukaryota</taxon>
        <taxon>Metazoa</taxon>
        <taxon>Chordata</taxon>
        <taxon>Craniata</taxon>
        <taxon>Vertebrata</taxon>
        <taxon>Euteleostomi</taxon>
        <taxon>Mammalia</taxon>
        <taxon>Eutheria</taxon>
        <taxon>Euarchontoglires</taxon>
        <taxon>Primates</taxon>
        <taxon>Haplorrhini</taxon>
        <taxon>Catarrhini</taxon>
        <taxon>Hominidae</taxon>
        <taxon>Homo</taxon>
    </lineage>
</organism>
<feature type="chain" id="PRO_0000048905" description="Motor neuron and pancreas homeobox protein 1">
    <location>
        <begin position="1"/>
        <end position="401"/>
    </location>
</feature>
<feature type="DNA-binding region" description="Homeobox" evidence="2">
    <location>
        <begin position="241"/>
        <end position="300"/>
    </location>
</feature>
<feature type="region of interest" description="Disordered" evidence="3">
    <location>
        <begin position="37"/>
        <end position="78"/>
    </location>
</feature>
<feature type="region of interest" description="Disordered" evidence="3">
    <location>
        <begin position="101"/>
        <end position="120"/>
    </location>
</feature>
<feature type="region of interest" description="Disordered" evidence="3">
    <location>
        <begin position="299"/>
        <end position="401"/>
    </location>
</feature>
<feature type="compositionally biased region" description="Gly residues" evidence="3">
    <location>
        <begin position="40"/>
        <end position="55"/>
    </location>
</feature>
<feature type="compositionally biased region" description="Low complexity" evidence="3">
    <location>
        <begin position="56"/>
        <end position="65"/>
    </location>
</feature>
<feature type="compositionally biased region" description="Gly residues" evidence="3">
    <location>
        <begin position="101"/>
        <end position="111"/>
    </location>
</feature>
<feature type="compositionally biased region" description="Basic and acidic residues" evidence="3">
    <location>
        <begin position="302"/>
        <end position="314"/>
    </location>
</feature>
<feature type="compositionally biased region" description="Basic and acidic residues" evidence="3">
    <location>
        <begin position="343"/>
        <end position="354"/>
    </location>
</feature>
<feature type="compositionally biased region" description="Acidic residues" evidence="3">
    <location>
        <begin position="355"/>
        <end position="366"/>
    </location>
</feature>
<feature type="compositionally biased region" description="Pro residues" evidence="3">
    <location>
        <begin position="391"/>
        <end position="401"/>
    </location>
</feature>
<feature type="modified residue" description="N-acetylmethionine" evidence="9">
    <location>
        <position position="1"/>
    </location>
</feature>
<feature type="modified residue" description="Phosphoserine" evidence="10">
    <location>
        <position position="77"/>
    </location>
</feature>
<feature type="modified residue" description="Phosphoserine" evidence="10">
    <location>
        <position position="79"/>
    </location>
</feature>
<feature type="splice variant" id="VSP_046773" description="In isoform 2." evidence="8">
    <location>
        <begin position="1"/>
        <end position="212"/>
    </location>
</feature>
<feature type="splice variant" id="VSP_046774" description="In isoform 2." evidence="8">
    <original>WLRASTAGMILPKMPDFNS</original>
    <variation>MGGLSTVGACPGILGAQQA</variation>
    <location>
        <begin position="213"/>
        <end position="231"/>
    </location>
</feature>
<feature type="sequence variant" id="VAR_068473" description="In CURRAS." evidence="6">
    <original>R</original>
    <variation>W</variation>
    <location>
        <position position="243"/>
    </location>
</feature>
<feature type="sequence variant" id="VAR_017874" description="In CURRAS." evidence="5">
    <original>R</original>
    <variation>G</variation>
    <location>
        <position position="245"/>
    </location>
</feature>
<feature type="sequence variant" id="VAR_017875" description="In CURRAS." evidence="5">
    <original>R</original>
    <variation>H</variation>
    <location>
        <position position="245"/>
    </location>
</feature>
<feature type="sequence variant" id="VAR_017876" description="In CURRAS; dbSNP:rs121912548." evidence="4">
    <original>T</original>
    <variation>S</variation>
    <location>
        <position position="246"/>
    </location>
</feature>
<feature type="sequence variant" id="VAR_017877" description="In CURRAS." evidence="5 6">
    <original>W</original>
    <variation>G</variation>
    <location>
        <position position="288"/>
    </location>
</feature>
<feature type="sequence variant" id="VAR_017878" description="In CURRAS." evidence="5">
    <original>W</original>
    <variation>L</variation>
    <location>
        <position position="288"/>
    </location>
</feature>
<feature type="sequence variant" id="VAR_068474" description="In CURRAS." evidence="7">
    <original>F</original>
    <variation>S</variation>
    <location>
        <position position="289"/>
    </location>
</feature>
<feature type="sequence variant" id="VAR_017879" description="In CURRAS." evidence="5">
    <original>Q</original>
    <variation>P</variation>
    <location>
        <position position="290"/>
    </location>
</feature>
<feature type="sequence variant" id="VAR_017880" description="In CURRAS; dbSNP:rs2134838763." evidence="5">
    <original>R</original>
    <variation>W</variation>
    <location>
        <position position="292"/>
    </location>
</feature>
<feature type="sequence variant" id="VAR_017881" description="In CURRAS." evidence="5">
    <original>R</original>
    <variation>Q</variation>
    <location>
        <position position="293"/>
    </location>
</feature>
<feature type="sequence variant" id="VAR_017882" description="In CURRAS." evidence="4">
    <original>R</original>
    <variation>W</variation>
    <location>
        <position position="293"/>
    </location>
</feature>
<feature type="sequence conflict" description="In Ref. 1; AAB60647." evidence="8" ref="1">
    <original>DALLAVDPPRAASAQSAPLALVTSLAAA</original>
    <variation>EPCWRWTPHEPPLAERALAKVTSPPVP</variation>
    <location>
        <begin position="10"/>
        <end position="37"/>
    </location>
</feature>
<feature type="sequence conflict" description="In Ref. 1; AAB60647." evidence="8" ref="1">
    <original>A</original>
    <variation>AAA</variation>
    <location>
        <position position="121"/>
    </location>
</feature>
<feature type="sequence conflict" description="In Ref. 3; AAD41467." evidence="8" ref="3">
    <original>A</original>
    <variation>ARA</variation>
    <location>
        <position position="121"/>
    </location>
</feature>
<feature type="sequence conflict" description="In Ref. 1; AAB60647." evidence="8" ref="1">
    <original>L</original>
    <variation>F</variation>
    <location>
        <position position="262"/>
    </location>
</feature>
<feature type="sequence conflict" description="In Ref. 1; AAB60647." evidence="8" ref="1">
    <original>G</original>
    <variation>R</variation>
    <location>
        <position position="340"/>
    </location>
</feature>
<feature type="sequence conflict" description="In Ref. 1; AAB60647." evidence="8" ref="1">
    <original>RRLR</original>
    <variation>PPA</variation>
    <location>
        <begin position="346"/>
        <end position="349"/>
    </location>
</feature>
<evidence type="ECO:0000250" key="1">
    <source>
        <dbReference type="UniProtKB" id="Q9QZW9"/>
    </source>
</evidence>
<evidence type="ECO:0000255" key="2">
    <source>
        <dbReference type="PROSITE-ProRule" id="PRU00108"/>
    </source>
</evidence>
<evidence type="ECO:0000256" key="3">
    <source>
        <dbReference type="SAM" id="MobiDB-lite"/>
    </source>
</evidence>
<evidence type="ECO:0000269" key="4">
    <source>
    </source>
</evidence>
<evidence type="ECO:0000269" key="5">
    <source>
    </source>
</evidence>
<evidence type="ECO:0000269" key="6">
    <source>
    </source>
</evidence>
<evidence type="ECO:0000269" key="7">
    <source>
    </source>
</evidence>
<evidence type="ECO:0000305" key="8"/>
<evidence type="ECO:0007744" key="9">
    <source>
    </source>
</evidence>
<evidence type="ECO:0007744" key="10">
    <source>
    </source>
</evidence>
<sequence>MEKSKNFRIDALLAVDPPRAASAQSAPLALVTSLAAAASGTGGGGGGGGASGGTSGSCSPASSEPPAAPADRLRAESPSPPRLLAAHCALLPKPGFLGAGGGGGGTGGGHGGPHHHAHPGAAAAAAAAAAAAAAGGLALGLHPGGAQGGAGLPAQAALYGHPVYGYSAAAAAAALAGQHPALSYSYPQVQGAHPAHPADPIKLGAGTFQLDQWLRASTAGMILPKMPDFNSQAQSNLLGKCRRPRTAFTSQQLLELEHQFKLNKYLSRPKRFEVATSLMLTETQVKIWFQNRRMKWKRSKKAKEQAAQEAEKQKGGGGGAGKGGAEEPGAEELLGPPAPGDKGSGRRLRDLRDSDPEEDEDEDDEDHFPYSNGASVHAASSDCSSEDDSPPPRPSHQPAPQ</sequence>
<protein>
    <recommendedName>
        <fullName>Motor neuron and pancreas homeobox protein 1</fullName>
    </recommendedName>
    <alternativeName>
        <fullName>Homeobox protein HB9</fullName>
    </alternativeName>
</protein>
<reference key="1">
    <citation type="journal article" date="1994" name="J. Biol. Chem.">
        <title>A novel human homeobox gene distantly related to proboscipedia is expressed in lymphoid and pancreatic tissues.</title>
        <authorList>
            <person name="Harrison K.A."/>
            <person name="Druey K.M."/>
            <person name="Deguchi Y."/>
            <person name="Tuscano J.M."/>
            <person name="Kehrl J.H."/>
        </authorList>
    </citation>
    <scope>NUCLEOTIDE SEQUENCE [GENOMIC DNA] (ISOFORM 1)</scope>
    <source>
        <tissue>Placenta</tissue>
    </source>
</reference>
<reference key="2">
    <citation type="journal article" date="2003" name="Nature">
        <title>The DNA sequence of human chromosome 7.</title>
        <authorList>
            <person name="Hillier L.W."/>
            <person name="Fulton R.S."/>
            <person name="Fulton L.A."/>
            <person name="Graves T.A."/>
            <person name="Pepin K.H."/>
            <person name="Wagner-McPherson C."/>
            <person name="Layman D."/>
            <person name="Maas J."/>
            <person name="Jaeger S."/>
            <person name="Walker R."/>
            <person name="Wylie K."/>
            <person name="Sekhon M."/>
            <person name="Becker M.C."/>
            <person name="O'Laughlin M.D."/>
            <person name="Schaller M.E."/>
            <person name="Fewell G.A."/>
            <person name="Delehaunty K.D."/>
            <person name="Miner T.L."/>
            <person name="Nash W.E."/>
            <person name="Cordes M."/>
            <person name="Du H."/>
            <person name="Sun H."/>
            <person name="Edwards J."/>
            <person name="Bradshaw-Cordum H."/>
            <person name="Ali J."/>
            <person name="Andrews S."/>
            <person name="Isak A."/>
            <person name="Vanbrunt A."/>
            <person name="Nguyen C."/>
            <person name="Du F."/>
            <person name="Lamar B."/>
            <person name="Courtney L."/>
            <person name="Kalicki J."/>
            <person name="Ozersky P."/>
            <person name="Bielicki L."/>
            <person name="Scott K."/>
            <person name="Holmes A."/>
            <person name="Harkins R."/>
            <person name="Harris A."/>
            <person name="Strong C.M."/>
            <person name="Hou S."/>
            <person name="Tomlinson C."/>
            <person name="Dauphin-Kohlberg S."/>
            <person name="Kozlowicz-Reilly A."/>
            <person name="Leonard S."/>
            <person name="Rohlfing T."/>
            <person name="Rock S.M."/>
            <person name="Tin-Wollam A.-M."/>
            <person name="Abbott A."/>
            <person name="Minx P."/>
            <person name="Maupin R."/>
            <person name="Strowmatt C."/>
            <person name="Latreille P."/>
            <person name="Miller N."/>
            <person name="Johnson D."/>
            <person name="Murray J."/>
            <person name="Woessner J.P."/>
            <person name="Wendl M.C."/>
            <person name="Yang S.-P."/>
            <person name="Schultz B.R."/>
            <person name="Wallis J.W."/>
            <person name="Spieth J."/>
            <person name="Bieri T.A."/>
            <person name="Nelson J.O."/>
            <person name="Berkowicz N."/>
            <person name="Wohldmann P.E."/>
            <person name="Cook L.L."/>
            <person name="Hickenbotham M.T."/>
            <person name="Eldred J."/>
            <person name="Williams D."/>
            <person name="Bedell J.A."/>
            <person name="Mardis E.R."/>
            <person name="Clifton S.W."/>
            <person name="Chissoe S.L."/>
            <person name="Marra M.A."/>
            <person name="Raymond C."/>
            <person name="Haugen E."/>
            <person name="Gillett W."/>
            <person name="Zhou Y."/>
            <person name="James R."/>
            <person name="Phelps K."/>
            <person name="Iadanoto S."/>
            <person name="Bubb K."/>
            <person name="Simms E."/>
            <person name="Levy R."/>
            <person name="Clendenning J."/>
            <person name="Kaul R."/>
            <person name="Kent W.J."/>
            <person name="Furey T.S."/>
            <person name="Baertsch R.A."/>
            <person name="Brent M.R."/>
            <person name="Keibler E."/>
            <person name="Flicek P."/>
            <person name="Bork P."/>
            <person name="Suyama M."/>
            <person name="Bailey J.A."/>
            <person name="Portnoy M.E."/>
            <person name="Torrents D."/>
            <person name="Chinwalla A.T."/>
            <person name="Gish W.R."/>
            <person name="Eddy S.R."/>
            <person name="McPherson J.D."/>
            <person name="Olson M.V."/>
            <person name="Eichler E.E."/>
            <person name="Green E.D."/>
            <person name="Waterston R.H."/>
            <person name="Wilson R.K."/>
        </authorList>
    </citation>
    <scope>NUCLEOTIDE SEQUENCE [LARGE SCALE GENOMIC DNA]</scope>
</reference>
<reference key="3">
    <citation type="journal article" date="1999" name="Genomics">
        <title>A physical and transcriptional map of the preaxial polydactyly locus on chromosome 7q36.</title>
        <authorList>
            <person name="Heus H.C."/>
            <person name="Hing A."/>
            <person name="van Baren M.J."/>
            <person name="Joosse M."/>
            <person name="Breedveld G.J."/>
            <person name="Wang J.C."/>
            <person name="Burgess A."/>
            <person name="Donnis-Keller H."/>
            <person name="Berglund C."/>
            <person name="Zguricas J."/>
            <person name="Scherer S.W."/>
            <person name="Rommens J.M."/>
            <person name="Oostra B.A."/>
            <person name="Heutink P."/>
        </authorList>
    </citation>
    <scope>NUCLEOTIDE SEQUENCE [GENOMIC DNA] OF 1-353 (ISOFORM 1)</scope>
</reference>
<reference key="4">
    <citation type="journal article" date="2008" name="Proc. Natl. Acad. Sci. U.S.A.">
        <title>A quantitative atlas of mitotic phosphorylation.</title>
        <authorList>
            <person name="Dephoure N."/>
            <person name="Zhou C."/>
            <person name="Villen J."/>
            <person name="Beausoleil S.A."/>
            <person name="Bakalarski C.E."/>
            <person name="Elledge S.J."/>
            <person name="Gygi S.P."/>
        </authorList>
    </citation>
    <scope>IDENTIFICATION BY MASS SPECTROMETRY [LARGE SCALE ANALYSIS]</scope>
    <source>
        <tissue>Cervix carcinoma</tissue>
    </source>
</reference>
<reference key="5">
    <citation type="journal article" date="2012" name="Proc. Natl. Acad. Sci. U.S.A.">
        <title>N-terminal acetylome analyses and functional insights of the N-terminal acetyltransferase NatB.</title>
        <authorList>
            <person name="Van Damme P."/>
            <person name="Lasa M."/>
            <person name="Polevoda B."/>
            <person name="Gazquez C."/>
            <person name="Elosegui-Artola A."/>
            <person name="Kim D.S."/>
            <person name="De Juan-Pardo E."/>
            <person name="Demeyer K."/>
            <person name="Hole K."/>
            <person name="Larrea E."/>
            <person name="Timmerman E."/>
            <person name="Prieto J."/>
            <person name="Arnesen T."/>
            <person name="Sherman F."/>
            <person name="Gevaert K."/>
            <person name="Aldabe R."/>
        </authorList>
    </citation>
    <scope>ACETYLATION [LARGE SCALE ANALYSIS] AT MET-1</scope>
    <scope>IDENTIFICATION BY MASS SPECTROMETRY [LARGE SCALE ANALYSIS]</scope>
</reference>
<reference key="6">
    <citation type="journal article" date="2013" name="J. Proteome Res.">
        <title>Toward a comprehensive characterization of a human cancer cell phosphoproteome.</title>
        <authorList>
            <person name="Zhou H."/>
            <person name="Di Palma S."/>
            <person name="Preisinger C."/>
            <person name="Peng M."/>
            <person name="Polat A.N."/>
            <person name="Heck A.J."/>
            <person name="Mohammed S."/>
        </authorList>
    </citation>
    <scope>PHOSPHORYLATION [LARGE SCALE ANALYSIS] AT SER-77 AND SER-79</scope>
    <scope>IDENTIFICATION BY MASS SPECTROMETRY [LARGE SCALE ANALYSIS]</scope>
    <source>
        <tissue>Cervix carcinoma</tissue>
    </source>
</reference>
<reference key="7">
    <citation type="journal article" date="2000" name="Am. J. Hum. Genet.">
        <title>Involvement of the HLXB9 homeobox gene in Currarino syndrome.</title>
        <authorList>
            <person name="Belloni E."/>
            <person name="Martucciello G."/>
            <person name="Verderio D."/>
            <person name="Ponti E."/>
            <person name="Seri M."/>
            <person name="Jasonni V."/>
            <person name="Torre M."/>
            <person name="Ferrari M."/>
            <person name="Tsui L.-C."/>
            <person name="Scherer S.W."/>
        </authorList>
    </citation>
    <scope>VARIANTS CURRAS SER-246 AND TRP-293</scope>
</reference>
<reference key="8">
    <citation type="journal article" date="2000" name="Am. J. Hum. Genet.">
        <title>Mutation analysis and embryonic expression of the HLXB9 Currarino syndrome gene.</title>
        <authorList>
            <person name="Hagan D.M."/>
            <person name="Ross A.J."/>
            <person name="Strachan T."/>
            <person name="Lynch S.A."/>
            <person name="Ruiz-Perez V."/>
            <person name="Wang Y.M."/>
            <person name="Scambler P."/>
            <person name="Custard E."/>
            <person name="Reardon W."/>
            <person name="Hassan S."/>
            <person name="Nixon P."/>
            <person name="Papapetrou C."/>
            <person name="Winter R.M."/>
            <person name="Edwards Y."/>
            <person name="Morrison K."/>
            <person name="Barrow M."/>
            <person name="Cordier-Alex M.P."/>
            <person name="Correia P."/>
            <person name="Galvin-Parton P.A."/>
            <person name="Gaskill S."/>
            <person name="Gaskin K.J."/>
            <person name="Garcia-Minaur S."/>
            <person name="Gereige R."/>
            <person name="Hayward R."/>
            <person name="Homfray T."/>
            <person name="McKeown C."/>
            <person name="Murday V."/>
            <person name="Plauchu H."/>
            <person name="Shannon N."/>
            <person name="Spitz L."/>
            <person name="Lindsay S."/>
        </authorList>
    </citation>
    <scope>VARIANTS CURRAS HIS-245; GLY-245; GLY-288; LEU-288; PRO-290; TRP-292 AND GLN-293</scope>
</reference>
<reference key="9">
    <citation type="journal article" date="2000" name="Am. J. Hum. Genet.">
        <authorList>
            <person name="Hagan D.M."/>
            <person name="Ross A.J."/>
            <person name="Strachan T."/>
            <person name="Lynch S.A."/>
            <person name="Ruiz-Perez V."/>
            <person name="Wang Y.M."/>
            <person name="Scambler P."/>
            <person name="Custard E."/>
            <person name="Reardon W."/>
            <person name="Hassan S."/>
            <person name="Nixon P."/>
            <person name="Papapetrou C."/>
            <person name="Winter R.M."/>
            <person name="Edwards Y."/>
            <person name="Morrison K."/>
            <person name="Barrow M."/>
            <person name="Cordier-Alex M.P."/>
            <person name="Correia P."/>
            <person name="Galvin-Parton P.A."/>
            <person name="Gaskill S."/>
            <person name="Gaskin K.J."/>
            <person name="Garcia-Minaur S."/>
            <person name="Gereige R."/>
            <person name="Hayward R."/>
            <person name="Homfray T."/>
            <person name="McKeown C."/>
            <person name="Murday V."/>
            <person name="Plauchu H."/>
            <person name="Shannon N."/>
            <person name="Spitz L."/>
            <person name="Lindsay S."/>
        </authorList>
    </citation>
    <scope>ERRATUM OF PUBMED:10749657</scope>
</reference>
<reference key="10">
    <citation type="journal article" date="2009" name="J. Pediatr. Surg.">
        <title>MNX1 (HLXB9) mutations in Currarino patients.</title>
        <authorList>
            <person name="Garcia-Barcelo M.M."/>
            <person name="Lui V.C."/>
            <person name="So M.T."/>
            <person name="Miao X."/>
            <person name="Leon T.Y."/>
            <person name="Yuan Z.W."/>
            <person name="Ngan E.S."/>
            <person name="Ehsan T."/>
            <person name="Chung P.H."/>
            <person name="Khong P.L."/>
            <person name="Wong K.K."/>
            <person name="Tam P.K."/>
        </authorList>
    </citation>
    <scope>VARIANTS CURRAS TRP-243 AND GLY-288</scope>
</reference>
<reference key="11">
    <citation type="journal article" date="2012" name="Gene">
        <title>Novel mutations in the MNX1 gene in two families with Currarino syndrome and variable phenotype.</title>
        <authorList>
            <person name="Markljung E."/>
            <person name="Adamovic T."/>
            <person name="Cao J."/>
            <person name="Naji H."/>
            <person name="Kaiser S."/>
            <person name="Wester T."/>
            <person name="Nordenskjold A."/>
        </authorList>
    </citation>
    <scope>VARIANT CURRAS SER-289</scope>
</reference>